<evidence type="ECO:0000255" key="1">
    <source>
        <dbReference type="HAMAP-Rule" id="MF_01307"/>
    </source>
</evidence>
<evidence type="ECO:0000305" key="2"/>
<comment type="function">
    <text evidence="1">With S4 and S12 plays an important role in translational accuracy.</text>
</comment>
<comment type="function">
    <text evidence="1">Located at the back of the 30S subunit body where it stabilizes the conformation of the head with respect to the body.</text>
</comment>
<comment type="subunit">
    <text evidence="1">Part of the 30S ribosomal subunit. Contacts proteins S4 and S8.</text>
</comment>
<comment type="domain">
    <text>The N-terminal domain interacts with the head of the 30S subunit; the C-terminal domain interacts with the body and contacts protein S4. The interaction surface between S4 and S5 is involved in control of translational fidelity.</text>
</comment>
<comment type="similarity">
    <text evidence="1">Belongs to the universal ribosomal protein uS5 family.</text>
</comment>
<accession>B1LBM3</accession>
<feature type="chain" id="PRO_1000140901" description="Small ribosomal subunit protein uS5">
    <location>
        <begin position="1"/>
        <end position="178"/>
    </location>
</feature>
<feature type="domain" description="S5 DRBM" evidence="1">
    <location>
        <begin position="15"/>
        <end position="78"/>
    </location>
</feature>
<proteinExistence type="inferred from homology"/>
<keyword id="KW-0687">Ribonucleoprotein</keyword>
<keyword id="KW-0689">Ribosomal protein</keyword>
<keyword id="KW-0694">RNA-binding</keyword>
<keyword id="KW-0699">rRNA-binding</keyword>
<sequence length="178" mass="19182">METQGVMKEIQYEEFEEKIIEIRRTSKVTKGGKNLSFRVVAIVGNKNGKVGLGIGKAREVPEAIRKAISAAKRNIIEVPVINGTIPHEIIGRQDASKVLLRPAAPGTGIIAGGTVRAVVELAGIQNILTKSLGSTNPLNLALATMNGLKNLLDPRKVAKLRDISVEEVFKGVRREDNA</sequence>
<organism>
    <name type="scientific">Thermotoga sp. (strain RQ2)</name>
    <dbReference type="NCBI Taxonomy" id="126740"/>
    <lineage>
        <taxon>Bacteria</taxon>
        <taxon>Thermotogati</taxon>
        <taxon>Thermotogota</taxon>
        <taxon>Thermotogae</taxon>
        <taxon>Thermotogales</taxon>
        <taxon>Thermotogaceae</taxon>
        <taxon>Thermotoga</taxon>
    </lineage>
</organism>
<reference key="1">
    <citation type="journal article" date="2011" name="J. Bacteriol.">
        <title>Genome sequence of Thermotoga sp. strain RQ2, a hyperthermophilic bacterium isolated from a geothermally heated region of the seafloor near Ribeira Quente, the Azores.</title>
        <authorList>
            <person name="Swithers K.S."/>
            <person name="DiPippo J.L."/>
            <person name="Bruce D.C."/>
            <person name="Detter C."/>
            <person name="Tapia R."/>
            <person name="Han S."/>
            <person name="Saunders E."/>
            <person name="Goodwin L.A."/>
            <person name="Han J."/>
            <person name="Woyke T."/>
            <person name="Pitluck S."/>
            <person name="Pennacchio L."/>
            <person name="Nolan M."/>
            <person name="Mikhailova N."/>
            <person name="Lykidis A."/>
            <person name="Land M.L."/>
            <person name="Brettin T."/>
            <person name="Stetter K.O."/>
            <person name="Nelson K.E."/>
            <person name="Gogarten J.P."/>
            <person name="Noll K.M."/>
        </authorList>
    </citation>
    <scope>NUCLEOTIDE SEQUENCE [LARGE SCALE GENOMIC DNA]</scope>
    <source>
        <strain>RQ2</strain>
    </source>
</reference>
<name>RS5_THESQ</name>
<dbReference type="EMBL" id="CP000969">
    <property type="protein sequence ID" value="ACB09721.1"/>
    <property type="molecule type" value="Genomic_DNA"/>
</dbReference>
<dbReference type="SMR" id="B1LBM3"/>
<dbReference type="KEGG" id="trq:TRQ2_1377"/>
<dbReference type="HOGENOM" id="CLU_065898_2_2_0"/>
<dbReference type="Proteomes" id="UP000001687">
    <property type="component" value="Chromosome"/>
</dbReference>
<dbReference type="GO" id="GO:0015935">
    <property type="term" value="C:small ribosomal subunit"/>
    <property type="evidence" value="ECO:0007669"/>
    <property type="project" value="InterPro"/>
</dbReference>
<dbReference type="GO" id="GO:0019843">
    <property type="term" value="F:rRNA binding"/>
    <property type="evidence" value="ECO:0007669"/>
    <property type="project" value="UniProtKB-UniRule"/>
</dbReference>
<dbReference type="GO" id="GO:0003735">
    <property type="term" value="F:structural constituent of ribosome"/>
    <property type="evidence" value="ECO:0007669"/>
    <property type="project" value="InterPro"/>
</dbReference>
<dbReference type="GO" id="GO:0006412">
    <property type="term" value="P:translation"/>
    <property type="evidence" value="ECO:0007669"/>
    <property type="project" value="UniProtKB-UniRule"/>
</dbReference>
<dbReference type="FunFam" id="3.30.160.20:FF:000001">
    <property type="entry name" value="30S ribosomal protein S5"/>
    <property type="match status" value="1"/>
</dbReference>
<dbReference type="FunFam" id="3.30.230.10:FF:000002">
    <property type="entry name" value="30S ribosomal protein S5"/>
    <property type="match status" value="1"/>
</dbReference>
<dbReference type="Gene3D" id="3.30.160.20">
    <property type="match status" value="1"/>
</dbReference>
<dbReference type="Gene3D" id="3.30.230.10">
    <property type="match status" value="1"/>
</dbReference>
<dbReference type="HAMAP" id="MF_01307_B">
    <property type="entry name" value="Ribosomal_uS5_B"/>
    <property type="match status" value="1"/>
</dbReference>
<dbReference type="InterPro" id="IPR020568">
    <property type="entry name" value="Ribosomal_Su5_D2-typ_SF"/>
</dbReference>
<dbReference type="InterPro" id="IPR000851">
    <property type="entry name" value="Ribosomal_uS5"/>
</dbReference>
<dbReference type="InterPro" id="IPR005712">
    <property type="entry name" value="Ribosomal_uS5_bac-type"/>
</dbReference>
<dbReference type="InterPro" id="IPR005324">
    <property type="entry name" value="Ribosomal_uS5_C"/>
</dbReference>
<dbReference type="InterPro" id="IPR013810">
    <property type="entry name" value="Ribosomal_uS5_N"/>
</dbReference>
<dbReference type="InterPro" id="IPR018192">
    <property type="entry name" value="Ribosomal_uS5_N_CS"/>
</dbReference>
<dbReference type="InterPro" id="IPR014721">
    <property type="entry name" value="Ribsml_uS5_D2-typ_fold_subgr"/>
</dbReference>
<dbReference type="NCBIfam" id="TIGR01021">
    <property type="entry name" value="rpsE_bact"/>
    <property type="match status" value="1"/>
</dbReference>
<dbReference type="PANTHER" id="PTHR48277">
    <property type="entry name" value="MITOCHONDRIAL RIBOSOMAL PROTEIN S5"/>
    <property type="match status" value="1"/>
</dbReference>
<dbReference type="PANTHER" id="PTHR48277:SF1">
    <property type="entry name" value="MITOCHONDRIAL RIBOSOMAL PROTEIN S5"/>
    <property type="match status" value="1"/>
</dbReference>
<dbReference type="Pfam" id="PF00333">
    <property type="entry name" value="Ribosomal_S5"/>
    <property type="match status" value="1"/>
</dbReference>
<dbReference type="Pfam" id="PF03719">
    <property type="entry name" value="Ribosomal_S5_C"/>
    <property type="match status" value="1"/>
</dbReference>
<dbReference type="SUPFAM" id="SSF54768">
    <property type="entry name" value="dsRNA-binding domain-like"/>
    <property type="match status" value="1"/>
</dbReference>
<dbReference type="SUPFAM" id="SSF54211">
    <property type="entry name" value="Ribosomal protein S5 domain 2-like"/>
    <property type="match status" value="1"/>
</dbReference>
<dbReference type="PROSITE" id="PS00585">
    <property type="entry name" value="RIBOSOMAL_S5"/>
    <property type="match status" value="1"/>
</dbReference>
<dbReference type="PROSITE" id="PS50881">
    <property type="entry name" value="S5_DSRBD"/>
    <property type="match status" value="1"/>
</dbReference>
<gene>
    <name evidence="1" type="primary">rpsE</name>
    <name type="ordered locus">TRQ2_1377</name>
</gene>
<protein>
    <recommendedName>
        <fullName evidence="1">Small ribosomal subunit protein uS5</fullName>
    </recommendedName>
    <alternativeName>
        <fullName evidence="2">30S ribosomal protein S5</fullName>
    </alternativeName>
</protein>